<organism>
    <name type="scientific">Flavobacterium daejeonense</name>
    <dbReference type="NCBI Taxonomy" id="350893"/>
    <lineage>
        <taxon>Bacteria</taxon>
        <taxon>Pseudomonadati</taxon>
        <taxon>Bacteroidota</taxon>
        <taxon>Flavobacteriia</taxon>
        <taxon>Flavobacteriales</taxon>
        <taxon>Flavobacteriaceae</taxon>
        <taxon>Flavobacterium</taxon>
    </lineage>
</organism>
<accession>P0DUD9</accession>
<gene>
    <name evidence="6" type="primary">cap12</name>
    <name type="ORF">H599_RS0110670</name>
</gene>
<keyword id="KW-0051">Antiviral defense</keyword>
<keyword id="KW-0378">Hydrolase</keyword>
<keyword id="KW-0547">Nucleotide-binding</keyword>
<evidence type="ECO:0000250" key="1">
    <source>
        <dbReference type="UniProtKB" id="A0A2T5Y4G4"/>
    </source>
</evidence>
<evidence type="ECO:0000255" key="2">
    <source>
        <dbReference type="PROSITE-ProRule" id="PRU00204"/>
    </source>
</evidence>
<evidence type="ECO:0000269" key="3">
    <source>
    </source>
</evidence>
<evidence type="ECO:0000303" key="4">
    <source>
    </source>
</evidence>
<evidence type="ECO:0000303" key="5">
    <source>
    </source>
</evidence>
<evidence type="ECO:0000305" key="6"/>
<evidence type="ECO:0000305" key="7">
    <source>
    </source>
</evidence>
<name>CAP12_FLADA</name>
<proteinExistence type="evidence at protein level"/>
<reference key="1">
    <citation type="submission" date="2013-07" db="EMBL/GenBank/DDBJ databases">
        <authorList>
            <person name="Kyrpides N."/>
            <person name="Huntemann M."/>
            <person name="Han J."/>
            <person name="Chen A."/>
            <person name="Mavromatis K."/>
            <person name="Markowitz V."/>
            <person name="Palaniappan K."/>
            <person name="Ivanova N."/>
            <person name="Schaumberg A."/>
            <person name="Pati A."/>
            <person name="Liolios K."/>
            <person name="Nordberg H.P."/>
            <person name="Cantor M.N."/>
            <person name="Hua S.X."/>
            <person name="Woyke T."/>
        </authorList>
    </citation>
    <scope>NUCLEOTIDE SEQUENCE [LARGE SCALE GENOMIC DNA]</scope>
    <source>
        <strain>DSM 17708</strain>
    </source>
</reference>
<reference key="2">
    <citation type="journal article" date="2020" name="Nature">
        <title>STING cyclic dinucleotide sensing originated in bacteria.</title>
        <authorList>
            <person name="Morehouse B.R."/>
            <person name="Govande A.A."/>
            <person name="Millman A."/>
            <person name="Keszei A.F.A."/>
            <person name="Lowey B."/>
            <person name="Ofir G."/>
            <person name="Shao S."/>
            <person name="Sorek R."/>
            <person name="Kranzusch P.J."/>
        </authorList>
    </citation>
    <scope>C-DI-GMP-BINDING</scope>
    <scope>DOMAIN</scope>
</reference>
<reference key="3">
    <citation type="journal article" date="2020" name="Nat. Microbiol.">
        <title>Diversity and classification of cyclic-oligonucleotide-based anti-phage signalling systems.</title>
        <authorList>
            <person name="Millman A."/>
            <person name="Melamed S."/>
            <person name="Amitai G."/>
            <person name="Sorek R."/>
        </authorList>
    </citation>
    <scope>CLASSIFICATION AND NOMENCLATURE</scope>
</reference>
<protein>
    <recommendedName>
        <fullName evidence="6">CD-NTase-associated protein 12</fullName>
        <shortName evidence="6">Cap12</shortName>
    </recommendedName>
    <alternativeName>
        <fullName evidence="1">NAD(+) hydrolase</fullName>
        <ecNumber evidence="1">3.2.2.5</ecNumber>
    </alternativeName>
    <alternativeName>
        <fullName evidence="5">TIR-STING</fullName>
        <shortName evidence="5">FdSTING</shortName>
    </alternativeName>
</protein>
<dbReference type="EC" id="3.2.2.5" evidence="1"/>
<dbReference type="EMBL" id="AUDK01000014">
    <property type="status" value="NOT_ANNOTATED_CDS"/>
    <property type="molecule type" value="Genomic_DNA"/>
</dbReference>
<dbReference type="SMR" id="P0DUD9"/>
<dbReference type="GO" id="GO:0003953">
    <property type="term" value="F:NAD+ nucleosidase activity"/>
    <property type="evidence" value="ECO:0007669"/>
    <property type="project" value="UniProtKB-EC"/>
</dbReference>
<dbReference type="GO" id="GO:0050135">
    <property type="term" value="F:NADP+ nucleosidase activity"/>
    <property type="evidence" value="ECO:0007669"/>
    <property type="project" value="InterPro"/>
</dbReference>
<dbReference type="GO" id="GO:0000166">
    <property type="term" value="F:nucleotide binding"/>
    <property type="evidence" value="ECO:0007669"/>
    <property type="project" value="UniProtKB-KW"/>
</dbReference>
<dbReference type="GO" id="GO:0051607">
    <property type="term" value="P:defense response to virus"/>
    <property type="evidence" value="ECO:0007669"/>
    <property type="project" value="UniProtKB-KW"/>
</dbReference>
<dbReference type="CDD" id="cd22659">
    <property type="entry name" value="STING_bact-like"/>
    <property type="match status" value="1"/>
</dbReference>
<dbReference type="InterPro" id="IPR019302">
    <property type="entry name" value="CAP12/PCTIR_TIR_dom"/>
</dbReference>
<dbReference type="InterPro" id="IPR046876">
    <property type="entry name" value="Prok_STING"/>
</dbReference>
<dbReference type="Pfam" id="PF10137">
    <property type="entry name" value="CAP12-PCTIR_TIR"/>
    <property type="match status" value="1"/>
</dbReference>
<dbReference type="Pfam" id="PF20300">
    <property type="entry name" value="prok_STING"/>
    <property type="match status" value="1"/>
</dbReference>
<comment type="function">
    <text evidence="1 4 7">Effector protein of a CBASS antiviral system with NAD(+) hydrolase activity (By similarity). CBASS (cyclic oligonucleotide-based antiphage signaling system) provides immunity against bacteriophage. The CD-NTase protein synthesizes cyclic nucleotides in response to infection; these serve as specific second messenger signals. The signals activate a diverse range of effectors, leading to bacterial cell death and thus abortive phage infection. A type I-D CBASS(GG) system (PubMed:32839535).</text>
</comment>
<comment type="function">
    <text evidence="1 3">Binds c-di-GMP, does not bind cUMP-AMP (PubMed:32877915). Upon activation by c-di-GMP forms filaments which hydrolyze NAD(+); filament formation is required for enzyme activation (By similarity).</text>
</comment>
<comment type="catalytic activity">
    <reaction evidence="1">
        <text>NAD(+) + H2O = ADP-D-ribose + nicotinamide + H(+)</text>
        <dbReference type="Rhea" id="RHEA:16301"/>
        <dbReference type="ChEBI" id="CHEBI:15377"/>
        <dbReference type="ChEBI" id="CHEBI:15378"/>
        <dbReference type="ChEBI" id="CHEBI:17154"/>
        <dbReference type="ChEBI" id="CHEBI:57540"/>
        <dbReference type="ChEBI" id="CHEBI:57967"/>
        <dbReference type="EC" id="3.2.2.5"/>
    </reaction>
</comment>
<comment type="activity regulation">
    <text evidence="1 7">NAD(+) hydrolase activity is strongly stimulated by c-di-GMP, weakly by 3'3'-cGAMP, very weakly by c-di-AMP but not at all by 2'3'-cGAMP (Probable). Self-association of TIR domains is required for NADase activity (By similarity).</text>
</comment>
<comment type="subunit">
    <text evidence="1">Forms homodimers; in the presence of c-di-GMP forms filaments with an ordered array of parallel-stacked subunits.</text>
</comment>
<comment type="domain">
    <text evidence="1 7">The N-terminal TIR domain mediates NAD(+) hydrolase (NADase) activity. The cyclic nucleotide binds in the C-terminal bacterial STING region (PubMed:32877915). Upon binding to c-di-GMP the STING region closes around the ligand, which is bound by residues from 2 adjacent subunits. STING-STING interactions are the main drivers of filamentation; rearrangements in the STING domain allow reorganization of packing of the TIR domains, forming the NADase active site; cross-filament contacts strengthen the assembly (By similarity).</text>
</comment>
<comment type="similarity">
    <text evidence="6">In the C-terminal section; belongs to the bacterial STING family.</text>
</comment>
<feature type="chain" id="PRO_0000451878" description="CD-NTase-associated protein 12">
    <location>
        <begin position="1"/>
        <end position="311"/>
    </location>
</feature>
<feature type="domain" description="TIR" evidence="2 7">
    <location>
        <begin position="4"/>
        <end position="121"/>
    </location>
</feature>
<feature type="region of interest" description="STING domain" evidence="1">
    <location>
        <begin position="157"/>
        <end position="311"/>
    </location>
</feature>
<feature type="binding site" evidence="1">
    <location>
        <position position="168"/>
    </location>
    <ligand>
        <name>3',3'-c-di-GMP</name>
        <dbReference type="ChEBI" id="CHEBI:58805"/>
    </ligand>
</feature>
<feature type="binding site" evidence="1">
    <location>
        <position position="232"/>
    </location>
    <ligand>
        <name>3',3'-c-di-GMP</name>
        <dbReference type="ChEBI" id="CHEBI:58805"/>
    </ligand>
</feature>
<feature type="binding site" evidence="1">
    <location>
        <position position="249"/>
    </location>
    <ligand>
        <name>3',3'-c-di-GMP</name>
        <dbReference type="ChEBI" id="CHEBI:58805"/>
    </ligand>
</feature>
<sequence length="311" mass="35575">MKTRIFIGSSKEGLEIAEYIKLQLGTKYECYLWTDDIFKFNESFLYTLLKEASLFDFGILVATKDDLSTIRDKSFDTPRDNVIFEFGLFLGRLGPSRAFVIQESGAKLPTDLLGITVPQFEKTIPLANSTSLNNEIERISKTIDEKITLGELGLLPSTVLAIGYFYNFVSIVCESIHTKSDIKVDDAIFKKFELNIVIPKDLDADIKKRATVYFKSKTLKEIQFETSSRNFPVFVTYDNQSKDVLKLYDMPTTLGGIDKAIEMFMRKGHIGKTSQQKLLEERELRNFQTTLQNLIDNDAFCRNIVKIIQEE</sequence>